<keyword id="KW-0456">Lyase</keyword>
<keyword id="KW-1185">Reference proteome</keyword>
<organism>
    <name type="scientific">Shigella flexneri</name>
    <dbReference type="NCBI Taxonomy" id="623"/>
    <lineage>
        <taxon>Bacteria</taxon>
        <taxon>Pseudomonadati</taxon>
        <taxon>Pseudomonadota</taxon>
        <taxon>Gammaproteobacteria</taxon>
        <taxon>Enterobacterales</taxon>
        <taxon>Enterobacteriaceae</taxon>
        <taxon>Shigella</taxon>
    </lineage>
</organism>
<name>CAID_SHIFL</name>
<evidence type="ECO:0000250" key="1"/>
<evidence type="ECO:0000255" key="2">
    <source>
        <dbReference type="HAMAP-Rule" id="MF_01051"/>
    </source>
</evidence>
<evidence type="ECO:0000305" key="3"/>
<comment type="function">
    <text evidence="2">Catalyzes the reversible dehydration of L-carnitinyl-CoA to crotonobetainyl-CoA.</text>
</comment>
<comment type="catalytic activity">
    <reaction evidence="2">
        <text>(R)-carnitinyl-CoA = crotonobetainyl-CoA + H2O</text>
        <dbReference type="Rhea" id="RHEA:28338"/>
        <dbReference type="ChEBI" id="CHEBI:15377"/>
        <dbReference type="ChEBI" id="CHEBI:60932"/>
        <dbReference type="ChEBI" id="CHEBI:60933"/>
        <dbReference type="EC" id="4.2.1.149"/>
    </reaction>
</comment>
<comment type="pathway">
    <text evidence="2">Amine and polyamine metabolism; carnitine metabolism.</text>
</comment>
<comment type="similarity">
    <text evidence="2">Belongs to the enoyl-CoA hydratase/isomerase family.</text>
</comment>
<comment type="sequence caution" evidence="3">
    <conflict type="erroneous initiation">
        <sequence resource="EMBL-CDS" id="AAN41699"/>
    </conflict>
</comment>
<comment type="sequence caution" evidence="3">
    <conflict type="erroneous initiation">
        <sequence resource="EMBL-CDS" id="AAP15580"/>
    </conflict>
</comment>
<protein>
    <recommendedName>
        <fullName evidence="2">Carnitinyl-CoA dehydratase</fullName>
        <ecNumber evidence="2">4.2.1.149</ecNumber>
    </recommendedName>
    <alternativeName>
        <fullName evidence="2">Crotonobetainyl-CoA hydratase</fullName>
    </alternativeName>
</protein>
<reference key="1">
    <citation type="journal article" date="2002" name="Nucleic Acids Res.">
        <title>Genome sequence of Shigella flexneri 2a: insights into pathogenicity through comparison with genomes of Escherichia coli K12 and O157.</title>
        <authorList>
            <person name="Jin Q."/>
            <person name="Yuan Z."/>
            <person name="Xu J."/>
            <person name="Wang Y."/>
            <person name="Shen Y."/>
            <person name="Lu W."/>
            <person name="Wang J."/>
            <person name="Liu H."/>
            <person name="Yang J."/>
            <person name="Yang F."/>
            <person name="Zhang X."/>
            <person name="Zhang J."/>
            <person name="Yang G."/>
            <person name="Wu H."/>
            <person name="Qu D."/>
            <person name="Dong J."/>
            <person name="Sun L."/>
            <person name="Xue Y."/>
            <person name="Zhao A."/>
            <person name="Gao Y."/>
            <person name="Zhu J."/>
            <person name="Kan B."/>
            <person name="Ding K."/>
            <person name="Chen S."/>
            <person name="Cheng H."/>
            <person name="Yao Z."/>
            <person name="He B."/>
            <person name="Chen R."/>
            <person name="Ma D."/>
            <person name="Qiang B."/>
            <person name="Wen Y."/>
            <person name="Hou Y."/>
            <person name="Yu J."/>
        </authorList>
    </citation>
    <scope>NUCLEOTIDE SEQUENCE [LARGE SCALE GENOMIC DNA]</scope>
    <source>
        <strain>301 / Serotype 2a</strain>
    </source>
</reference>
<reference key="2">
    <citation type="journal article" date="2003" name="Infect. Immun.">
        <title>Complete genome sequence and comparative genomics of Shigella flexneri serotype 2a strain 2457T.</title>
        <authorList>
            <person name="Wei J."/>
            <person name="Goldberg M.B."/>
            <person name="Burland V."/>
            <person name="Venkatesan M.M."/>
            <person name="Deng W."/>
            <person name="Fournier G."/>
            <person name="Mayhew G.F."/>
            <person name="Plunkett G. III"/>
            <person name="Rose D.J."/>
            <person name="Darling A."/>
            <person name="Mau B."/>
            <person name="Perna N.T."/>
            <person name="Payne S.M."/>
            <person name="Runyen-Janecky L.J."/>
            <person name="Zhou S."/>
            <person name="Schwartz D.C."/>
            <person name="Blattner F.R."/>
        </authorList>
    </citation>
    <scope>NUCLEOTIDE SEQUENCE [LARGE SCALE GENOMIC DNA]</scope>
    <source>
        <strain>ATCC 700930 / 2457T / Serotype 2a</strain>
    </source>
</reference>
<gene>
    <name evidence="2" type="primary">caiD</name>
    <name type="ordered locus">SF0033</name>
    <name type="ordered locus">S0035</name>
</gene>
<feature type="initiator methionine" description="Removed" evidence="1">
    <location>
        <position position="1"/>
    </location>
</feature>
<feature type="chain" id="PRO_0000109354" description="Carnitinyl-CoA dehydratase">
    <location>
        <begin position="2"/>
        <end position="261"/>
    </location>
</feature>
<feature type="active site" description="Nucleophile" evidence="2">
    <location>
        <position position="111"/>
    </location>
</feature>
<feature type="active site" description="Proton acceptor" evidence="2">
    <location>
        <position position="131"/>
    </location>
</feature>
<sequence length="261" mass="28220">MSESLHLTRNGSILEITLDRPKANAIDAKTSFEMGEVFLNFRDDPQLRVAIITGAGEKFFSAGWDLKAAAEGEAPDADFGPGGFAGLTEIFNLDKPVIAAVNGYAFGGGFELALAADFIVCADNASFALPEAKLGIVPDSGGVLRLPKILPPTIVNEMVMTGRRMGAEEALRWGIVNRVVSQAELMDNARELAQQLVNSAPLAIAALKEIYRTTSEMPVEEAYRYIRSGVLKHYPSVLHSEDAIEGPLAFAEKRDPVWKGR</sequence>
<proteinExistence type="inferred from homology"/>
<dbReference type="EC" id="4.2.1.149" evidence="2"/>
<dbReference type="EMBL" id="AE005674">
    <property type="protein sequence ID" value="AAN41699.1"/>
    <property type="status" value="ALT_INIT"/>
    <property type="molecule type" value="Genomic_DNA"/>
</dbReference>
<dbReference type="EMBL" id="AE014073">
    <property type="protein sequence ID" value="AAP15580.1"/>
    <property type="status" value="ALT_INIT"/>
    <property type="molecule type" value="Genomic_DNA"/>
</dbReference>
<dbReference type="RefSeq" id="NP_705992.1">
    <property type="nucleotide sequence ID" value="NC_004337.2"/>
</dbReference>
<dbReference type="RefSeq" id="WP_005053639.1">
    <property type="nucleotide sequence ID" value="NZ_WPGW01000005.1"/>
</dbReference>
<dbReference type="SMR" id="P59395"/>
<dbReference type="STRING" id="198214.SF0033"/>
<dbReference type="PaxDb" id="198214-SF0033"/>
<dbReference type="GeneID" id="1024587"/>
<dbReference type="KEGG" id="sfl:SF0033"/>
<dbReference type="KEGG" id="sfx:S0035"/>
<dbReference type="PATRIC" id="fig|198214.7.peg.39"/>
<dbReference type="HOGENOM" id="CLU_009834_7_6_6"/>
<dbReference type="UniPathway" id="UPA00117"/>
<dbReference type="Proteomes" id="UP000001006">
    <property type="component" value="Chromosome"/>
</dbReference>
<dbReference type="Proteomes" id="UP000002673">
    <property type="component" value="Chromosome"/>
</dbReference>
<dbReference type="GO" id="GO:0016836">
    <property type="term" value="F:hydro-lyase activity"/>
    <property type="evidence" value="ECO:0007669"/>
    <property type="project" value="UniProtKB-UniRule"/>
</dbReference>
<dbReference type="GO" id="GO:0008735">
    <property type="term" value="F:L-carnitine CoA-transferase activity"/>
    <property type="evidence" value="ECO:0007669"/>
    <property type="project" value="RHEA"/>
</dbReference>
<dbReference type="GO" id="GO:0009437">
    <property type="term" value="P:carnitine metabolic process"/>
    <property type="evidence" value="ECO:0007669"/>
    <property type="project" value="UniProtKB-UniRule"/>
</dbReference>
<dbReference type="GO" id="GO:0006635">
    <property type="term" value="P:fatty acid beta-oxidation"/>
    <property type="evidence" value="ECO:0007669"/>
    <property type="project" value="TreeGrafter"/>
</dbReference>
<dbReference type="CDD" id="cd06558">
    <property type="entry name" value="crotonase-like"/>
    <property type="match status" value="1"/>
</dbReference>
<dbReference type="FunFam" id="1.10.12.10:FF:000005">
    <property type="entry name" value="Carnitinyl-CoA dehydratase"/>
    <property type="match status" value="1"/>
</dbReference>
<dbReference type="FunFam" id="3.90.226.10:FF:000009">
    <property type="entry name" value="Carnitinyl-CoA dehydratase"/>
    <property type="match status" value="1"/>
</dbReference>
<dbReference type="Gene3D" id="3.90.226.10">
    <property type="entry name" value="2-enoyl-CoA Hydratase, Chain A, domain 1"/>
    <property type="match status" value="1"/>
</dbReference>
<dbReference type="Gene3D" id="1.10.12.10">
    <property type="entry name" value="Lyase 2-enoyl-coa Hydratase, Chain A, domain 2"/>
    <property type="match status" value="1"/>
</dbReference>
<dbReference type="HAMAP" id="MF_01051">
    <property type="entry name" value="CaiD"/>
    <property type="match status" value="1"/>
</dbReference>
<dbReference type="InterPro" id="IPR022852">
    <property type="entry name" value="Carnitinyl_CoA_dehydratase"/>
</dbReference>
<dbReference type="InterPro" id="IPR029045">
    <property type="entry name" value="ClpP/crotonase-like_dom_sf"/>
</dbReference>
<dbReference type="InterPro" id="IPR018376">
    <property type="entry name" value="Enoyl-CoA_hyd/isom_CS"/>
</dbReference>
<dbReference type="InterPro" id="IPR001753">
    <property type="entry name" value="Enoyl-CoA_hydra/iso"/>
</dbReference>
<dbReference type="InterPro" id="IPR014748">
    <property type="entry name" value="Enoyl-CoA_hydra_C"/>
</dbReference>
<dbReference type="NCBIfam" id="NF002936">
    <property type="entry name" value="PRK03580.1"/>
    <property type="match status" value="1"/>
</dbReference>
<dbReference type="PANTHER" id="PTHR11941:SF54">
    <property type="entry name" value="ENOYL-COA HYDRATASE, MITOCHONDRIAL"/>
    <property type="match status" value="1"/>
</dbReference>
<dbReference type="PANTHER" id="PTHR11941">
    <property type="entry name" value="ENOYL-COA HYDRATASE-RELATED"/>
    <property type="match status" value="1"/>
</dbReference>
<dbReference type="Pfam" id="PF00378">
    <property type="entry name" value="ECH_1"/>
    <property type="match status" value="1"/>
</dbReference>
<dbReference type="SUPFAM" id="SSF52096">
    <property type="entry name" value="ClpP/crotonase"/>
    <property type="match status" value="1"/>
</dbReference>
<dbReference type="PROSITE" id="PS00166">
    <property type="entry name" value="ENOYL_COA_HYDRATASE"/>
    <property type="match status" value="1"/>
</dbReference>
<accession>P59395</accession>